<name>SENX3_MYCTO</name>
<sequence length="410" mass="44825">MTVFSALLLAGVLSALALAVGGAVGMRLTSRVVEQRQRVATEWSGITVSQMLQCIVTLMPLGAAVVDTHRDVVYLNERAKELGLVRDRQLDDQAWRAARQALGGEDVEFDLSPRKRSATGRSGLSVHGHARLLSEEDRRFAVVFVHDQSDYARMEAARRDFVANVSHELKTPVGAMALLAEALLASADDSETVRRFAEKVLIEANRLGDMVAELIELSRLQGAERLPNMTDVDVDTIVSEAISRHKVAADNADIEVRTDAPSNLRVLGDQTLLVTALANLVSNAIAYSPRGSLVSISRRRRGANIEIAVTDRGIGIAPEDQERVFERFFRGDKARSRATGGSGLGLAIVKHVAANHDGTIRVWSKPGTGSTFTLALPALIEAYHDDERPEQAREPELRSNRSQREEELSR</sequence>
<proteinExistence type="evidence at transcript level"/>
<comment type="function">
    <text evidence="1 5 6 7">Member of the two-component regulatory system SenX3/RegX3 involved in stress response (PubMed:19686042, PubMed:24722908). Autophosphorylates, and then transfers the phosphate group to RegX3 (By similarity). The system is involved in phosphate starvation response (PubMed:19686042). Involved in virulence (PubMed:25344463). SenX3 and RegX3 are equally required for optimal growth and morphological response during phosphate depletion (PubMed:25344463).</text>
</comment>
<comment type="catalytic activity">
    <reaction evidence="1">
        <text>ATP + protein L-histidine = ADP + protein N-phospho-L-histidine.</text>
        <dbReference type="EC" id="2.7.13.3"/>
    </reaction>
</comment>
<comment type="subcellular location">
    <subcellularLocation>
        <location evidence="8">Cell membrane</location>
        <topology evidence="2">Multi-pass membrane protein</topology>
    </subcellularLocation>
</comment>
<comment type="induction">
    <text evidence="5 6">Induced during phosphate depletion and nutrient starvation (PubMed:19686042, PubMed:24722908). Part of the senX3-regX3 operon (PubMed:24722908). The two genes are separated by a rather long intercistronic region composed of a class of duplicated sequences named mycobacterial interspersed repetitive units (MIRUs) (PubMed:24722908). SenX3 and regX3 are coexpressed but also differentially transcribed during nutrient-rich and stress conditions (PubMed:24722908).</text>
</comment>
<comment type="PTM">
    <text evidence="1">Autophosphorylated.</text>
</comment>
<comment type="disruption phenotype">
    <text evidence="7">Disruption of the gene reduces regX3 expression during phosphate starvation (PubMed:25344463). Disruption mutant shows a marked growth defect and premature entry into stationary phase relative to the isogenic wild-type during phosphate depletion (PubMed:25344463). The senX3-deficient mutant shows markedly higher survival relative to the regX3-deficient mutant upon prolonged nutrient starvation and in the lungs of mice (PubMed:25344463).</text>
</comment>
<gene>
    <name type="primary">senX3</name>
    <name type="ordered locus">MT0509</name>
</gene>
<organism>
    <name type="scientific">Mycobacterium tuberculosis (strain CDC 1551 / Oshkosh)</name>
    <dbReference type="NCBI Taxonomy" id="83331"/>
    <lineage>
        <taxon>Bacteria</taxon>
        <taxon>Bacillati</taxon>
        <taxon>Actinomycetota</taxon>
        <taxon>Actinomycetes</taxon>
        <taxon>Mycobacteriales</taxon>
        <taxon>Mycobacteriaceae</taxon>
        <taxon>Mycobacterium</taxon>
        <taxon>Mycobacterium tuberculosis complex</taxon>
    </lineage>
</organism>
<reference key="1">
    <citation type="journal article" date="2002" name="J. Bacteriol.">
        <title>Whole-genome comparison of Mycobacterium tuberculosis clinical and laboratory strains.</title>
        <authorList>
            <person name="Fleischmann R.D."/>
            <person name="Alland D."/>
            <person name="Eisen J.A."/>
            <person name="Carpenter L."/>
            <person name="White O."/>
            <person name="Peterson J.D."/>
            <person name="DeBoy R.T."/>
            <person name="Dodson R.J."/>
            <person name="Gwinn M.L."/>
            <person name="Haft D.H."/>
            <person name="Hickey E.K."/>
            <person name="Kolonay J.F."/>
            <person name="Nelson W.C."/>
            <person name="Umayam L.A."/>
            <person name="Ermolaeva M.D."/>
            <person name="Salzberg S.L."/>
            <person name="Delcher A."/>
            <person name="Utterback T.R."/>
            <person name="Weidman J.F."/>
            <person name="Khouri H.M."/>
            <person name="Gill J."/>
            <person name="Mikula A."/>
            <person name="Bishai W."/>
            <person name="Jacobs W.R. Jr."/>
            <person name="Venter J.C."/>
            <person name="Fraser C.M."/>
        </authorList>
    </citation>
    <scope>NUCLEOTIDE SEQUENCE [LARGE SCALE GENOMIC DNA]</scope>
    <source>
        <strain>CDC 1551 / Oshkosh</strain>
    </source>
</reference>
<reference key="2">
    <citation type="journal article" date="2009" name="J. Infect. Dis.">
        <title>Phosphate depletion: a novel trigger for Mycobacterium tuberculosis persistence.</title>
        <authorList>
            <person name="Rifat D."/>
            <person name="Bishai W.R."/>
            <person name="Karakousis P.C."/>
        </authorList>
    </citation>
    <scope>FUNCTION</scope>
    <scope>INDUCTION</scope>
    <source>
        <strain>CDC 1551 / Oshkosh</strain>
    </source>
</reference>
<reference key="3">
    <citation type="journal article" date="2014" name="Microbiology">
        <title>Differential regulation of the two-component regulatory system senX3-regX3 in Mycobacterium tuberculosis.</title>
        <authorList>
            <person name="Rifat D."/>
            <person name="Karakousis P.C."/>
        </authorList>
    </citation>
    <scope>FUNCTION</scope>
    <scope>TRANSCRIPTIONAL REGULATION</scope>
    <source>
        <strain>CDC 1551 / Oshkosh</strain>
    </source>
</reference>
<reference key="4">
    <citation type="journal article" date="2014" name="BMC Microbiol.">
        <title>senX3-independent contribution of regX3 to Mycobacterium tuberculosis virulence.</title>
        <authorList>
            <person name="Rifat D."/>
            <person name="Belchis D.A."/>
            <person name="Karakousis P.C."/>
        </authorList>
    </citation>
    <scope>FUNCTION</scope>
    <scope>DISRUPTION PHENOTYPE</scope>
    <source>
        <strain>CDC 1551 / Oshkosh</strain>
    </source>
</reference>
<accession>P9WGK4</accession>
<accession>L0T5I7</accession>
<accession>O07129</accession>
<accession>P0A600</accession>
<accession>Q11155</accession>
<feature type="chain" id="PRO_0000428346" description="Sensor-like histidine kinase SenX3">
    <location>
        <begin position="1"/>
        <end position="410"/>
    </location>
</feature>
<feature type="transmembrane region" description="Helical" evidence="2">
    <location>
        <begin position="6"/>
        <end position="26"/>
    </location>
</feature>
<feature type="transmembrane region" description="Helical" evidence="2">
    <location>
        <begin position="46"/>
        <end position="66"/>
    </location>
</feature>
<feature type="domain" description="Histidine kinase" evidence="3">
    <location>
        <begin position="164"/>
        <end position="380"/>
    </location>
</feature>
<feature type="region of interest" description="Disordered" evidence="4">
    <location>
        <begin position="385"/>
        <end position="410"/>
    </location>
</feature>
<feature type="modified residue" description="Phosphohistidine; by autocatalysis" evidence="3">
    <location>
        <position position="167"/>
    </location>
</feature>
<protein>
    <recommendedName>
        <fullName evidence="8">Sensor-like histidine kinase SenX3</fullName>
        <ecNumber evidence="1">2.7.13.3</ecNumber>
    </recommendedName>
</protein>
<keyword id="KW-0067">ATP-binding</keyword>
<keyword id="KW-1003">Cell membrane</keyword>
<keyword id="KW-0418">Kinase</keyword>
<keyword id="KW-0472">Membrane</keyword>
<keyword id="KW-0547">Nucleotide-binding</keyword>
<keyword id="KW-0597">Phosphoprotein</keyword>
<keyword id="KW-1185">Reference proteome</keyword>
<keyword id="KW-0346">Stress response</keyword>
<keyword id="KW-0808">Transferase</keyword>
<keyword id="KW-0812">Transmembrane</keyword>
<keyword id="KW-1133">Transmembrane helix</keyword>
<keyword id="KW-0902">Two-component regulatory system</keyword>
<keyword id="KW-0843">Virulence</keyword>
<evidence type="ECO:0000250" key="1">
    <source>
        <dbReference type="UniProtKB" id="P0A601"/>
    </source>
</evidence>
<evidence type="ECO:0000255" key="2"/>
<evidence type="ECO:0000255" key="3">
    <source>
        <dbReference type="PROSITE-ProRule" id="PRU00107"/>
    </source>
</evidence>
<evidence type="ECO:0000256" key="4">
    <source>
        <dbReference type="SAM" id="MobiDB-lite"/>
    </source>
</evidence>
<evidence type="ECO:0000269" key="5">
    <source>
    </source>
</evidence>
<evidence type="ECO:0000269" key="6">
    <source>
    </source>
</evidence>
<evidence type="ECO:0000269" key="7">
    <source>
    </source>
</evidence>
<evidence type="ECO:0000305" key="8"/>
<dbReference type="EC" id="2.7.13.3" evidence="1"/>
<dbReference type="EMBL" id="AE000516">
    <property type="protein sequence ID" value="AAK44732.1"/>
    <property type="molecule type" value="Genomic_DNA"/>
</dbReference>
<dbReference type="PIR" id="E70744">
    <property type="entry name" value="E70744"/>
</dbReference>
<dbReference type="RefSeq" id="WP_003402390.1">
    <property type="nucleotide sequence ID" value="NZ_KK341227.1"/>
</dbReference>
<dbReference type="SMR" id="P9WGK4"/>
<dbReference type="GeneID" id="45424451"/>
<dbReference type="KEGG" id="mtc:MT0509"/>
<dbReference type="PATRIC" id="fig|83331.31.peg.539"/>
<dbReference type="HOGENOM" id="CLU_000445_89_2_11"/>
<dbReference type="Proteomes" id="UP000001020">
    <property type="component" value="Chromosome"/>
</dbReference>
<dbReference type="GO" id="GO:0005886">
    <property type="term" value="C:plasma membrane"/>
    <property type="evidence" value="ECO:0007669"/>
    <property type="project" value="UniProtKB-SubCell"/>
</dbReference>
<dbReference type="GO" id="GO:0005524">
    <property type="term" value="F:ATP binding"/>
    <property type="evidence" value="ECO:0007669"/>
    <property type="project" value="UniProtKB-KW"/>
</dbReference>
<dbReference type="GO" id="GO:0004721">
    <property type="term" value="F:phosphoprotein phosphatase activity"/>
    <property type="evidence" value="ECO:0007669"/>
    <property type="project" value="TreeGrafter"/>
</dbReference>
<dbReference type="GO" id="GO:0000155">
    <property type="term" value="F:phosphorelay sensor kinase activity"/>
    <property type="evidence" value="ECO:0007669"/>
    <property type="project" value="InterPro"/>
</dbReference>
<dbReference type="GO" id="GO:0016036">
    <property type="term" value="P:cellular response to phosphate starvation"/>
    <property type="evidence" value="ECO:0007669"/>
    <property type="project" value="TreeGrafter"/>
</dbReference>
<dbReference type="CDD" id="cd00082">
    <property type="entry name" value="HisKA"/>
    <property type="match status" value="1"/>
</dbReference>
<dbReference type="FunFam" id="1.10.287.130:FF:000008">
    <property type="entry name" value="Two-component sensor histidine kinase"/>
    <property type="match status" value="1"/>
</dbReference>
<dbReference type="FunFam" id="3.30.565.10:FF:000045">
    <property type="entry name" value="Two-component sensor histidine kinase"/>
    <property type="match status" value="1"/>
</dbReference>
<dbReference type="Gene3D" id="1.10.287.130">
    <property type="match status" value="1"/>
</dbReference>
<dbReference type="Gene3D" id="3.30.565.10">
    <property type="entry name" value="Histidine kinase-like ATPase, C-terminal domain"/>
    <property type="match status" value="1"/>
</dbReference>
<dbReference type="InterPro" id="IPR050351">
    <property type="entry name" value="2-comp_sensor_kinase"/>
</dbReference>
<dbReference type="InterPro" id="IPR036890">
    <property type="entry name" value="HATPase_C_sf"/>
</dbReference>
<dbReference type="InterPro" id="IPR005467">
    <property type="entry name" value="His_kinase_dom"/>
</dbReference>
<dbReference type="InterPro" id="IPR003661">
    <property type="entry name" value="HisK_dim/P_dom"/>
</dbReference>
<dbReference type="InterPro" id="IPR036097">
    <property type="entry name" value="HisK_dim/P_sf"/>
</dbReference>
<dbReference type="InterPro" id="IPR004358">
    <property type="entry name" value="Sig_transdc_His_kin-like_C"/>
</dbReference>
<dbReference type="PANTHER" id="PTHR45453">
    <property type="entry name" value="PHOSPHATE REGULON SENSOR PROTEIN PHOR"/>
    <property type="match status" value="1"/>
</dbReference>
<dbReference type="PANTHER" id="PTHR45453:SF1">
    <property type="entry name" value="PHOSPHATE REGULON SENSOR PROTEIN PHOR"/>
    <property type="match status" value="1"/>
</dbReference>
<dbReference type="Pfam" id="PF02518">
    <property type="entry name" value="HATPase_c"/>
    <property type="match status" value="1"/>
</dbReference>
<dbReference type="Pfam" id="PF00512">
    <property type="entry name" value="HisKA"/>
    <property type="match status" value="1"/>
</dbReference>
<dbReference type="PRINTS" id="PR00344">
    <property type="entry name" value="BCTRLSENSOR"/>
</dbReference>
<dbReference type="SMART" id="SM00387">
    <property type="entry name" value="HATPase_c"/>
    <property type="match status" value="1"/>
</dbReference>
<dbReference type="SMART" id="SM00388">
    <property type="entry name" value="HisKA"/>
    <property type="match status" value="1"/>
</dbReference>
<dbReference type="SUPFAM" id="SSF55874">
    <property type="entry name" value="ATPase domain of HSP90 chaperone/DNA topoisomerase II/histidine kinase"/>
    <property type="match status" value="1"/>
</dbReference>
<dbReference type="SUPFAM" id="SSF47384">
    <property type="entry name" value="Homodimeric domain of signal transducing histidine kinase"/>
    <property type="match status" value="1"/>
</dbReference>
<dbReference type="PROSITE" id="PS50109">
    <property type="entry name" value="HIS_KIN"/>
    <property type="match status" value="1"/>
</dbReference>